<organism>
    <name type="scientific">Rhizobium etli (strain CIAT 652)</name>
    <dbReference type="NCBI Taxonomy" id="491916"/>
    <lineage>
        <taxon>Bacteria</taxon>
        <taxon>Pseudomonadati</taxon>
        <taxon>Pseudomonadota</taxon>
        <taxon>Alphaproteobacteria</taxon>
        <taxon>Hyphomicrobiales</taxon>
        <taxon>Rhizobiaceae</taxon>
        <taxon>Rhizobium/Agrobacterium group</taxon>
        <taxon>Rhizobium</taxon>
    </lineage>
</organism>
<evidence type="ECO:0000255" key="1">
    <source>
        <dbReference type="HAMAP-Rule" id="MF_01356"/>
    </source>
</evidence>
<reference key="1">
    <citation type="journal article" date="2010" name="Appl. Environ. Microbiol.">
        <title>Conserved symbiotic plasmid DNA sequences in the multireplicon pangenomic structure of Rhizobium etli.</title>
        <authorList>
            <person name="Gonzalez V."/>
            <person name="Acosta J.L."/>
            <person name="Santamaria R.I."/>
            <person name="Bustos P."/>
            <person name="Fernandez J.L."/>
            <person name="Hernandez Gonzalez I.L."/>
            <person name="Diaz R."/>
            <person name="Flores M."/>
            <person name="Palacios R."/>
            <person name="Mora J."/>
            <person name="Davila G."/>
        </authorList>
    </citation>
    <scope>NUCLEOTIDE SEQUENCE [LARGE SCALE GENOMIC DNA]</scope>
    <source>
        <strain>CIAT 652</strain>
    </source>
</reference>
<sequence length="194" mass="21295">MGVTPVSNEPLVAQQPKGIIDPSTGKPIGSNDAFFGEINNELADKGFLVTSTDELINWARTGSLMWMTFGLACCAVEMMQLSMPRYDVERFGFAPRASPRQSDVMIVAGTLTNKMAPALRKVYDQMPEPRYVISMGSCANGGGYYHYSYSVVRGCDRVVPIDIYVPGCPPTAEALLYGVLLLQKKIRRTGTIER</sequence>
<gene>
    <name evidence="1" type="primary">nuoB1</name>
    <name type="ordered locus">RHECIAT_CH0001676</name>
</gene>
<dbReference type="EC" id="7.1.1.-" evidence="1"/>
<dbReference type="EMBL" id="CP001074">
    <property type="protein sequence ID" value="ACE90650.1"/>
    <property type="molecule type" value="Genomic_DNA"/>
</dbReference>
<dbReference type="SMR" id="B3PVZ8"/>
<dbReference type="KEGG" id="rec:RHECIAT_CH0001676"/>
<dbReference type="eggNOG" id="COG0377">
    <property type="taxonomic scope" value="Bacteria"/>
</dbReference>
<dbReference type="HOGENOM" id="CLU_055737_7_0_5"/>
<dbReference type="Proteomes" id="UP000008817">
    <property type="component" value="Chromosome"/>
</dbReference>
<dbReference type="GO" id="GO:0005886">
    <property type="term" value="C:plasma membrane"/>
    <property type="evidence" value="ECO:0007669"/>
    <property type="project" value="UniProtKB-SubCell"/>
</dbReference>
<dbReference type="GO" id="GO:0045271">
    <property type="term" value="C:respiratory chain complex I"/>
    <property type="evidence" value="ECO:0007669"/>
    <property type="project" value="TreeGrafter"/>
</dbReference>
<dbReference type="GO" id="GO:0051539">
    <property type="term" value="F:4 iron, 4 sulfur cluster binding"/>
    <property type="evidence" value="ECO:0007669"/>
    <property type="project" value="UniProtKB-KW"/>
</dbReference>
<dbReference type="GO" id="GO:0005506">
    <property type="term" value="F:iron ion binding"/>
    <property type="evidence" value="ECO:0007669"/>
    <property type="project" value="UniProtKB-UniRule"/>
</dbReference>
<dbReference type="GO" id="GO:0008137">
    <property type="term" value="F:NADH dehydrogenase (ubiquinone) activity"/>
    <property type="evidence" value="ECO:0007669"/>
    <property type="project" value="InterPro"/>
</dbReference>
<dbReference type="GO" id="GO:0050136">
    <property type="term" value="F:NADH:ubiquinone reductase (non-electrogenic) activity"/>
    <property type="evidence" value="ECO:0007669"/>
    <property type="project" value="UniProtKB-UniRule"/>
</dbReference>
<dbReference type="GO" id="GO:0048038">
    <property type="term" value="F:quinone binding"/>
    <property type="evidence" value="ECO:0007669"/>
    <property type="project" value="UniProtKB-KW"/>
</dbReference>
<dbReference type="GO" id="GO:0009060">
    <property type="term" value="P:aerobic respiration"/>
    <property type="evidence" value="ECO:0007669"/>
    <property type="project" value="TreeGrafter"/>
</dbReference>
<dbReference type="GO" id="GO:0015990">
    <property type="term" value="P:electron transport coupled proton transport"/>
    <property type="evidence" value="ECO:0007669"/>
    <property type="project" value="TreeGrafter"/>
</dbReference>
<dbReference type="FunFam" id="3.40.50.12280:FF:000001">
    <property type="entry name" value="NADH-quinone oxidoreductase subunit B 2"/>
    <property type="match status" value="1"/>
</dbReference>
<dbReference type="Gene3D" id="3.40.50.12280">
    <property type="match status" value="1"/>
</dbReference>
<dbReference type="HAMAP" id="MF_01356">
    <property type="entry name" value="NDH1_NuoB"/>
    <property type="match status" value="1"/>
</dbReference>
<dbReference type="InterPro" id="IPR006137">
    <property type="entry name" value="NADH_UbQ_OxRdtase-like_20kDa"/>
</dbReference>
<dbReference type="InterPro" id="IPR006138">
    <property type="entry name" value="NADH_UQ_OxRdtase_20Kd_su"/>
</dbReference>
<dbReference type="NCBIfam" id="TIGR01957">
    <property type="entry name" value="nuoB_fam"/>
    <property type="match status" value="1"/>
</dbReference>
<dbReference type="NCBIfam" id="NF005012">
    <property type="entry name" value="PRK06411.1"/>
    <property type="match status" value="1"/>
</dbReference>
<dbReference type="PANTHER" id="PTHR11995">
    <property type="entry name" value="NADH DEHYDROGENASE"/>
    <property type="match status" value="1"/>
</dbReference>
<dbReference type="PANTHER" id="PTHR11995:SF14">
    <property type="entry name" value="NADH DEHYDROGENASE [UBIQUINONE] IRON-SULFUR PROTEIN 7, MITOCHONDRIAL"/>
    <property type="match status" value="1"/>
</dbReference>
<dbReference type="Pfam" id="PF01058">
    <property type="entry name" value="Oxidored_q6"/>
    <property type="match status" value="1"/>
</dbReference>
<dbReference type="SUPFAM" id="SSF56770">
    <property type="entry name" value="HydA/Nqo6-like"/>
    <property type="match status" value="1"/>
</dbReference>
<dbReference type="PROSITE" id="PS01150">
    <property type="entry name" value="COMPLEX1_20K"/>
    <property type="match status" value="1"/>
</dbReference>
<keyword id="KW-0004">4Fe-4S</keyword>
<keyword id="KW-0997">Cell inner membrane</keyword>
<keyword id="KW-1003">Cell membrane</keyword>
<keyword id="KW-0408">Iron</keyword>
<keyword id="KW-0411">Iron-sulfur</keyword>
<keyword id="KW-0472">Membrane</keyword>
<keyword id="KW-0479">Metal-binding</keyword>
<keyword id="KW-0520">NAD</keyword>
<keyword id="KW-0874">Quinone</keyword>
<keyword id="KW-1278">Translocase</keyword>
<keyword id="KW-0813">Transport</keyword>
<keyword id="KW-0830">Ubiquinone</keyword>
<name>NUOB1_RHIE6</name>
<proteinExistence type="inferred from homology"/>
<feature type="chain" id="PRO_0000376327" description="NADH-quinone oxidoreductase subunit B 1">
    <location>
        <begin position="1"/>
        <end position="194"/>
    </location>
</feature>
<feature type="binding site" evidence="1">
    <location>
        <position position="73"/>
    </location>
    <ligand>
        <name>[4Fe-4S] cluster</name>
        <dbReference type="ChEBI" id="CHEBI:49883"/>
    </ligand>
</feature>
<feature type="binding site" evidence="1">
    <location>
        <position position="74"/>
    </location>
    <ligand>
        <name>[4Fe-4S] cluster</name>
        <dbReference type="ChEBI" id="CHEBI:49883"/>
    </ligand>
</feature>
<feature type="binding site" evidence="1">
    <location>
        <position position="138"/>
    </location>
    <ligand>
        <name>[4Fe-4S] cluster</name>
        <dbReference type="ChEBI" id="CHEBI:49883"/>
    </ligand>
</feature>
<feature type="binding site" evidence="1">
    <location>
        <position position="168"/>
    </location>
    <ligand>
        <name>[4Fe-4S] cluster</name>
        <dbReference type="ChEBI" id="CHEBI:49883"/>
    </ligand>
</feature>
<accession>B3PVZ8</accession>
<comment type="function">
    <text evidence="1">NDH-1 shuttles electrons from NADH, via FMN and iron-sulfur (Fe-S) centers, to quinones in the respiratory chain. The immediate electron acceptor for the enzyme in this species is believed to be ubiquinone. Couples the redox reaction to proton translocation (for every two electrons transferred, four hydrogen ions are translocated across the cytoplasmic membrane), and thus conserves the redox energy in a proton gradient.</text>
</comment>
<comment type="catalytic activity">
    <reaction evidence="1">
        <text>a quinone + NADH + 5 H(+)(in) = a quinol + NAD(+) + 4 H(+)(out)</text>
        <dbReference type="Rhea" id="RHEA:57888"/>
        <dbReference type="ChEBI" id="CHEBI:15378"/>
        <dbReference type="ChEBI" id="CHEBI:24646"/>
        <dbReference type="ChEBI" id="CHEBI:57540"/>
        <dbReference type="ChEBI" id="CHEBI:57945"/>
        <dbReference type="ChEBI" id="CHEBI:132124"/>
    </reaction>
</comment>
<comment type="cofactor">
    <cofactor evidence="1">
        <name>[4Fe-4S] cluster</name>
        <dbReference type="ChEBI" id="CHEBI:49883"/>
    </cofactor>
    <text evidence="1">Binds 1 [4Fe-4S] cluster.</text>
</comment>
<comment type="subunit">
    <text evidence="1">NDH-1 is composed of 14 different subunits. Subunits NuoB, C, D, E, F, and G constitute the peripheral sector of the complex.</text>
</comment>
<comment type="subcellular location">
    <subcellularLocation>
        <location evidence="1">Cell inner membrane</location>
        <topology evidence="1">Peripheral membrane protein</topology>
        <orientation evidence="1">Cytoplasmic side</orientation>
    </subcellularLocation>
</comment>
<comment type="similarity">
    <text evidence="1">Belongs to the complex I 20 kDa subunit family.</text>
</comment>
<protein>
    <recommendedName>
        <fullName evidence="1">NADH-quinone oxidoreductase subunit B 1</fullName>
        <ecNumber evidence="1">7.1.1.-</ecNumber>
    </recommendedName>
    <alternativeName>
        <fullName evidence="1">NADH dehydrogenase I subunit B 1</fullName>
    </alternativeName>
    <alternativeName>
        <fullName evidence="1">NDH-1 subunit B 1</fullName>
    </alternativeName>
</protein>